<organism>
    <name type="scientific">Arabidopsis thaliana</name>
    <name type="common">Mouse-ear cress</name>
    <dbReference type="NCBI Taxonomy" id="3702"/>
    <lineage>
        <taxon>Eukaryota</taxon>
        <taxon>Viridiplantae</taxon>
        <taxon>Streptophyta</taxon>
        <taxon>Embryophyta</taxon>
        <taxon>Tracheophyta</taxon>
        <taxon>Spermatophyta</taxon>
        <taxon>Magnoliopsida</taxon>
        <taxon>eudicotyledons</taxon>
        <taxon>Gunneridae</taxon>
        <taxon>Pentapetalae</taxon>
        <taxon>rosids</taxon>
        <taxon>malvids</taxon>
        <taxon>Brassicales</taxon>
        <taxon>Brassicaceae</taxon>
        <taxon>Camelineae</taxon>
        <taxon>Arabidopsis</taxon>
    </lineage>
</organism>
<reference key="1">
    <citation type="journal article" date="1998" name="Plant Physiol.">
        <title>Multiple genes encoding the conserved CCAAT-box transcription factor complex are expressed in Arabidopsis.</title>
        <authorList>
            <person name="Edwards D."/>
            <person name="Murray J.A.H."/>
            <person name="Smith A.G."/>
        </authorList>
    </citation>
    <scope>NUCLEOTIDE SEQUENCE [MRNA] (ISOFORM 2)</scope>
    <scope>TISSUE SPECIFICITY</scope>
</reference>
<reference key="2">
    <citation type="journal article" date="2000" name="Nature">
        <title>Sequence and analysis of chromosome 5 of the plant Arabidopsis thaliana.</title>
        <authorList>
            <person name="Tabata S."/>
            <person name="Kaneko T."/>
            <person name="Nakamura Y."/>
            <person name="Kotani H."/>
            <person name="Kato T."/>
            <person name="Asamizu E."/>
            <person name="Miyajima N."/>
            <person name="Sasamoto S."/>
            <person name="Kimura T."/>
            <person name="Hosouchi T."/>
            <person name="Kawashima K."/>
            <person name="Kohara M."/>
            <person name="Matsumoto M."/>
            <person name="Matsuno A."/>
            <person name="Muraki A."/>
            <person name="Nakayama S."/>
            <person name="Nakazaki N."/>
            <person name="Naruo K."/>
            <person name="Okumura S."/>
            <person name="Shinpo S."/>
            <person name="Takeuchi C."/>
            <person name="Wada T."/>
            <person name="Watanabe A."/>
            <person name="Yamada M."/>
            <person name="Yasuda M."/>
            <person name="Sato S."/>
            <person name="de la Bastide M."/>
            <person name="Huang E."/>
            <person name="Spiegel L."/>
            <person name="Gnoj L."/>
            <person name="O'Shaughnessy A."/>
            <person name="Preston R."/>
            <person name="Habermann K."/>
            <person name="Murray J."/>
            <person name="Johnson D."/>
            <person name="Rohlfing T."/>
            <person name="Nelson J."/>
            <person name="Stoneking T."/>
            <person name="Pepin K."/>
            <person name="Spieth J."/>
            <person name="Sekhon M."/>
            <person name="Armstrong J."/>
            <person name="Becker M."/>
            <person name="Belter E."/>
            <person name="Cordum H."/>
            <person name="Cordes M."/>
            <person name="Courtney L."/>
            <person name="Courtney W."/>
            <person name="Dante M."/>
            <person name="Du H."/>
            <person name="Edwards J."/>
            <person name="Fryman J."/>
            <person name="Haakensen B."/>
            <person name="Lamar E."/>
            <person name="Latreille P."/>
            <person name="Leonard S."/>
            <person name="Meyer R."/>
            <person name="Mulvaney E."/>
            <person name="Ozersky P."/>
            <person name="Riley A."/>
            <person name="Strowmatt C."/>
            <person name="Wagner-McPherson C."/>
            <person name="Wollam A."/>
            <person name="Yoakum M."/>
            <person name="Bell M."/>
            <person name="Dedhia N."/>
            <person name="Parnell L."/>
            <person name="Shah R."/>
            <person name="Rodriguez M."/>
            <person name="Hoon See L."/>
            <person name="Vil D."/>
            <person name="Baker J."/>
            <person name="Kirchoff K."/>
            <person name="Toth K."/>
            <person name="King L."/>
            <person name="Bahret A."/>
            <person name="Miller B."/>
            <person name="Marra M.A."/>
            <person name="Martienssen R."/>
            <person name="McCombie W.R."/>
            <person name="Wilson R.K."/>
            <person name="Murphy G."/>
            <person name="Bancroft I."/>
            <person name="Volckaert G."/>
            <person name="Wambutt R."/>
            <person name="Duesterhoeft A."/>
            <person name="Stiekema W."/>
            <person name="Pohl T."/>
            <person name="Entian K.-D."/>
            <person name="Terryn N."/>
            <person name="Hartley N."/>
            <person name="Bent E."/>
            <person name="Johnson S."/>
            <person name="Langham S.-A."/>
            <person name="McCullagh B."/>
            <person name="Robben J."/>
            <person name="Grymonprez B."/>
            <person name="Zimmermann W."/>
            <person name="Ramsperger U."/>
            <person name="Wedler H."/>
            <person name="Balke K."/>
            <person name="Wedler E."/>
            <person name="Peters S."/>
            <person name="van Staveren M."/>
            <person name="Dirkse W."/>
            <person name="Mooijman P."/>
            <person name="Klein Lankhorst R."/>
            <person name="Weitzenegger T."/>
            <person name="Bothe G."/>
            <person name="Rose M."/>
            <person name="Hauf J."/>
            <person name="Berneiser S."/>
            <person name="Hempel S."/>
            <person name="Feldpausch M."/>
            <person name="Lamberth S."/>
            <person name="Villarroel R."/>
            <person name="Gielen J."/>
            <person name="Ardiles W."/>
            <person name="Bents O."/>
            <person name="Lemcke K."/>
            <person name="Kolesov G."/>
            <person name="Mayer K.F.X."/>
            <person name="Rudd S."/>
            <person name="Schoof H."/>
            <person name="Schueller C."/>
            <person name="Zaccaria P."/>
            <person name="Mewes H.-W."/>
            <person name="Bevan M."/>
            <person name="Fransz P.F."/>
        </authorList>
    </citation>
    <scope>NUCLEOTIDE SEQUENCE [LARGE SCALE GENOMIC DNA]</scope>
    <source>
        <strain>cv. Columbia</strain>
    </source>
</reference>
<reference key="3">
    <citation type="journal article" date="2017" name="Plant J.">
        <title>Araport11: a complete reannotation of the Arabidopsis thaliana reference genome.</title>
        <authorList>
            <person name="Cheng C.Y."/>
            <person name="Krishnakumar V."/>
            <person name="Chan A.P."/>
            <person name="Thibaud-Nissen F."/>
            <person name="Schobel S."/>
            <person name="Town C.D."/>
        </authorList>
    </citation>
    <scope>GENOME REANNOTATION</scope>
    <source>
        <strain>cv. Columbia</strain>
    </source>
</reference>
<reference key="4">
    <citation type="journal article" date="2001" name="Gene">
        <title>Regulation of the CCAAT-binding NF-Y subunits in Arabidopsis thaliana.</title>
        <authorList>
            <person name="Gusmaroli G."/>
            <person name="Tonelli C."/>
            <person name="Mantovani R."/>
        </authorList>
    </citation>
    <scope>TISSUE SPECIFICITY</scope>
</reference>
<reference key="5">
    <citation type="journal article" date="2002" name="Gene">
        <title>Regulation of novel members of the Arabidopsis thaliana CCAAT-binding nuclear factor Y subunits.</title>
        <authorList>
            <person name="Gusmaroli G."/>
            <person name="Tonelli C."/>
            <person name="Mantovani R."/>
        </authorList>
    </citation>
    <scope>GENE FAMILY</scope>
    <scope>NOMENCLATURE</scope>
</reference>
<feature type="chain" id="PRO_0000198771" description="Nuclear transcription factor Y subunit A-1">
    <location>
        <begin position="1"/>
        <end position="272"/>
    </location>
</feature>
<feature type="DNA-binding region" description="NFYA/HAP2-type" evidence="2">
    <location>
        <begin position="205"/>
        <end position="230"/>
    </location>
</feature>
<feature type="region of interest" description="Disordered" evidence="3">
    <location>
        <begin position="1"/>
        <end position="20"/>
    </location>
</feature>
<feature type="region of interest" description="Disordered" evidence="3">
    <location>
        <begin position="34"/>
        <end position="106"/>
    </location>
</feature>
<feature type="region of interest" description="Disordered" evidence="3">
    <location>
        <begin position="206"/>
        <end position="272"/>
    </location>
</feature>
<feature type="short sequence motif" description="Subunit association domain (SAD)">
    <location>
        <begin position="175"/>
        <end position="198"/>
    </location>
</feature>
<feature type="compositionally biased region" description="Polar residues" evidence="3">
    <location>
        <begin position="46"/>
        <end position="61"/>
    </location>
</feature>
<feature type="compositionally biased region" description="Polar residues" evidence="3">
    <location>
        <begin position="82"/>
        <end position="92"/>
    </location>
</feature>
<feature type="compositionally biased region" description="Basic residues" evidence="3">
    <location>
        <begin position="211"/>
        <end position="221"/>
    </location>
</feature>
<feature type="compositionally biased region" description="Basic and acidic residues" evidence="3">
    <location>
        <begin position="229"/>
        <end position="247"/>
    </location>
</feature>
<feature type="compositionally biased region" description="Polar residues" evidence="3">
    <location>
        <begin position="248"/>
        <end position="257"/>
    </location>
</feature>
<feature type="compositionally biased region" description="Polar residues" evidence="3">
    <location>
        <begin position="263"/>
        <end position="272"/>
    </location>
</feature>
<feature type="splice variant" id="VSP_016046" description="In isoform 2." evidence="6">
    <location>
        <position position="93"/>
    </location>
</feature>
<keyword id="KW-0010">Activator</keyword>
<keyword id="KW-0025">Alternative splicing</keyword>
<keyword id="KW-0238">DNA-binding</keyword>
<keyword id="KW-0539">Nucleus</keyword>
<keyword id="KW-1185">Reference proteome</keyword>
<keyword id="KW-0804">Transcription</keyword>
<keyword id="KW-0805">Transcription regulation</keyword>
<dbReference type="EMBL" id="Y13720">
    <property type="protein sequence ID" value="CAA74048.1"/>
    <property type="molecule type" value="mRNA"/>
</dbReference>
<dbReference type="EMBL" id="AL353013">
    <property type="protein sequence ID" value="CAB88248.1"/>
    <property type="molecule type" value="Genomic_DNA"/>
</dbReference>
<dbReference type="EMBL" id="CP002688">
    <property type="protein sequence ID" value="AED91817.1"/>
    <property type="molecule type" value="Genomic_DNA"/>
</dbReference>
<dbReference type="EMBL" id="CP002688">
    <property type="protein sequence ID" value="AED91818.1"/>
    <property type="molecule type" value="Genomic_DNA"/>
</dbReference>
<dbReference type="EMBL" id="CP002688">
    <property type="protein sequence ID" value="AED91819.1"/>
    <property type="molecule type" value="Genomic_DNA"/>
</dbReference>
<dbReference type="EMBL" id="CP002688">
    <property type="protein sequence ID" value="AED91820.1"/>
    <property type="molecule type" value="Genomic_DNA"/>
</dbReference>
<dbReference type="EMBL" id="CP002688">
    <property type="protein sequence ID" value="ANM71110.1"/>
    <property type="molecule type" value="Genomic_DNA"/>
</dbReference>
<dbReference type="PIR" id="T49898">
    <property type="entry name" value="T49898"/>
</dbReference>
<dbReference type="RefSeq" id="NP_001318552.1">
    <molecule id="Q9LXV5-1"/>
    <property type="nucleotide sequence ID" value="NM_001343248.1"/>
</dbReference>
<dbReference type="RefSeq" id="NP_568282.1">
    <molecule id="Q9LXV5-1"/>
    <property type="nucleotide sequence ID" value="NM_121287.4"/>
</dbReference>
<dbReference type="RefSeq" id="NP_850811.1">
    <molecule id="Q9LXV5-2"/>
    <property type="nucleotide sequence ID" value="NM_180480.3"/>
</dbReference>
<dbReference type="RefSeq" id="NP_974773.1">
    <molecule id="Q9LXV5-1"/>
    <property type="nucleotide sequence ID" value="NM_203044.4"/>
</dbReference>
<dbReference type="RefSeq" id="NP_974774.1">
    <molecule id="Q9LXV5-2"/>
    <property type="nucleotide sequence ID" value="NM_203045.2"/>
</dbReference>
<dbReference type="SMR" id="Q9LXV5"/>
<dbReference type="BioGRID" id="16402">
    <property type="interactions" value="9"/>
</dbReference>
<dbReference type="FunCoup" id="Q9LXV5">
    <property type="interactions" value="174"/>
</dbReference>
<dbReference type="STRING" id="3702.Q9LXV5"/>
<dbReference type="iPTMnet" id="Q9LXV5"/>
<dbReference type="PaxDb" id="3702-AT5G12840.3"/>
<dbReference type="ProteomicsDB" id="250590">
    <molecule id="Q9LXV5-1"/>
</dbReference>
<dbReference type="EnsemblPlants" id="AT5G12840.1">
    <molecule id="Q9LXV5-1"/>
    <property type="protein sequence ID" value="AT5G12840.1"/>
    <property type="gene ID" value="AT5G12840"/>
</dbReference>
<dbReference type="EnsemblPlants" id="AT5G12840.2">
    <molecule id="Q9LXV5-2"/>
    <property type="protein sequence ID" value="AT5G12840.2"/>
    <property type="gene ID" value="AT5G12840"/>
</dbReference>
<dbReference type="EnsemblPlants" id="AT5G12840.3">
    <molecule id="Q9LXV5-1"/>
    <property type="protein sequence ID" value="AT5G12840.3"/>
    <property type="gene ID" value="AT5G12840"/>
</dbReference>
<dbReference type="EnsemblPlants" id="AT5G12840.4">
    <molecule id="Q9LXV5-2"/>
    <property type="protein sequence ID" value="AT5G12840.4"/>
    <property type="gene ID" value="AT5G12840"/>
</dbReference>
<dbReference type="EnsemblPlants" id="AT5G12840.5">
    <molecule id="Q9LXV5-1"/>
    <property type="protein sequence ID" value="AT5G12840.5"/>
    <property type="gene ID" value="AT5G12840"/>
</dbReference>
<dbReference type="GeneID" id="831124"/>
<dbReference type="Gramene" id="AT5G12840.1">
    <molecule id="Q9LXV5-1"/>
    <property type="protein sequence ID" value="AT5G12840.1"/>
    <property type="gene ID" value="AT5G12840"/>
</dbReference>
<dbReference type="Gramene" id="AT5G12840.2">
    <molecule id="Q9LXV5-2"/>
    <property type="protein sequence ID" value="AT5G12840.2"/>
    <property type="gene ID" value="AT5G12840"/>
</dbReference>
<dbReference type="Gramene" id="AT5G12840.3">
    <molecule id="Q9LXV5-1"/>
    <property type="protein sequence ID" value="AT5G12840.3"/>
    <property type="gene ID" value="AT5G12840"/>
</dbReference>
<dbReference type="Gramene" id="AT5G12840.4">
    <molecule id="Q9LXV5-2"/>
    <property type="protein sequence ID" value="AT5G12840.4"/>
    <property type="gene ID" value="AT5G12840"/>
</dbReference>
<dbReference type="Gramene" id="AT5G12840.5">
    <molecule id="Q9LXV5-1"/>
    <property type="protein sequence ID" value="AT5G12840.5"/>
    <property type="gene ID" value="AT5G12840"/>
</dbReference>
<dbReference type="KEGG" id="ath:AT5G12840"/>
<dbReference type="Araport" id="AT5G12840"/>
<dbReference type="TAIR" id="AT5G12840">
    <property type="gene designation" value="NF-YA1"/>
</dbReference>
<dbReference type="eggNOG" id="KOG1561">
    <property type="taxonomic scope" value="Eukaryota"/>
</dbReference>
<dbReference type="InParanoid" id="Q9LXV5"/>
<dbReference type="OMA" id="EADPYNI"/>
<dbReference type="PhylomeDB" id="Q9LXV5"/>
<dbReference type="PRO" id="PR:Q9LXV5"/>
<dbReference type="Proteomes" id="UP000006548">
    <property type="component" value="Chromosome 5"/>
</dbReference>
<dbReference type="ExpressionAtlas" id="Q9LXV5">
    <property type="expression patterns" value="baseline and differential"/>
</dbReference>
<dbReference type="GO" id="GO:0016602">
    <property type="term" value="C:CCAAT-binding factor complex"/>
    <property type="evidence" value="ECO:0000250"/>
    <property type="project" value="TAIR"/>
</dbReference>
<dbReference type="GO" id="GO:0003700">
    <property type="term" value="F:DNA-binding transcription factor activity"/>
    <property type="evidence" value="ECO:0000250"/>
    <property type="project" value="TAIR"/>
</dbReference>
<dbReference type="GO" id="GO:0000976">
    <property type="term" value="F:transcription cis-regulatory region binding"/>
    <property type="evidence" value="ECO:0000353"/>
    <property type="project" value="TAIR"/>
</dbReference>
<dbReference type="GO" id="GO:0009793">
    <property type="term" value="P:embryo development ending in seed dormancy"/>
    <property type="evidence" value="ECO:0000315"/>
    <property type="project" value="TAIR"/>
</dbReference>
<dbReference type="GO" id="GO:0055046">
    <property type="term" value="P:microgametogenesis"/>
    <property type="evidence" value="ECO:0000315"/>
    <property type="project" value="TAIR"/>
</dbReference>
<dbReference type="GO" id="GO:0006355">
    <property type="term" value="P:regulation of DNA-templated transcription"/>
    <property type="evidence" value="ECO:0000250"/>
    <property type="project" value="TAIR"/>
</dbReference>
<dbReference type="GO" id="GO:0048510">
    <property type="term" value="P:regulation of timing of transition from vegetative to reproductive phase"/>
    <property type="evidence" value="ECO:0000315"/>
    <property type="project" value="TAIR"/>
</dbReference>
<dbReference type="GO" id="GO:0048316">
    <property type="term" value="P:seed development"/>
    <property type="evidence" value="ECO:0000315"/>
    <property type="project" value="TAIR"/>
</dbReference>
<dbReference type="GO" id="GO:0010262">
    <property type="term" value="P:somatic embryogenesis"/>
    <property type="evidence" value="ECO:0000315"/>
    <property type="project" value="TAIR"/>
</dbReference>
<dbReference type="Gene3D" id="6.10.250.2430">
    <property type="match status" value="1"/>
</dbReference>
<dbReference type="InterPro" id="IPR018362">
    <property type="entry name" value="CCAAT-binding_factor_CS"/>
</dbReference>
<dbReference type="InterPro" id="IPR001289">
    <property type="entry name" value="NFYA"/>
</dbReference>
<dbReference type="PANTHER" id="PTHR12632">
    <property type="entry name" value="TRANSCRIPTION FACTOR NF-Y ALPHA-RELATED"/>
    <property type="match status" value="1"/>
</dbReference>
<dbReference type="Pfam" id="PF02045">
    <property type="entry name" value="CBFB_NFYA"/>
    <property type="match status" value="1"/>
</dbReference>
<dbReference type="PRINTS" id="PR00616">
    <property type="entry name" value="CCAATSUBUNTB"/>
</dbReference>
<dbReference type="SMART" id="SM00521">
    <property type="entry name" value="CBF"/>
    <property type="match status" value="1"/>
</dbReference>
<dbReference type="PROSITE" id="PS00686">
    <property type="entry name" value="NFYA_HAP2_1"/>
    <property type="match status" value="1"/>
</dbReference>
<dbReference type="PROSITE" id="PS51152">
    <property type="entry name" value="NFYA_HAP2_2"/>
    <property type="match status" value="1"/>
</dbReference>
<protein>
    <recommendedName>
        <fullName>Nuclear transcription factor Y subunit A-1</fullName>
        <shortName>AtNF-YA-1</shortName>
    </recommendedName>
    <alternativeName>
        <fullName>Protein EMBRYO DEFECTIVE 2220</fullName>
    </alternativeName>
    <alternativeName>
        <fullName>Transcriptional activator HAP2A</fullName>
    </alternativeName>
</protein>
<comment type="function">
    <text evidence="1">Stimulates the transcription of various genes by recognizing and binding to a CCAAT motif in promoters.</text>
</comment>
<comment type="subunit">
    <text evidence="1">Heterotrimeric transcription factor composed of three components, NF-YA, NF-YB and NF-YC. NF-YB and NF-YC must interact and dimerize for NF-YA association and DNA binding (By similarity).</text>
</comment>
<comment type="subcellular location">
    <subcellularLocation>
        <location evidence="7">Nucleus</location>
    </subcellularLocation>
</comment>
<comment type="alternative products">
    <event type="alternative splicing"/>
    <isoform>
        <id>Q9LXV5-1</id>
        <name>1</name>
        <sequence type="displayed"/>
    </isoform>
    <isoform>
        <id>Q9LXV5-2</id>
        <name>2</name>
        <sequence type="described" ref="VSP_016046"/>
    </isoform>
</comment>
<comment type="tissue specificity">
    <text evidence="4 5">Ubiquitous.</text>
</comment>
<comment type="miscellaneous">
    <molecule>Isoform 2</molecule>
    <text evidence="7">May be due to a competing acceptor splice site.</text>
</comment>
<comment type="similarity">
    <text evidence="2">Belongs to the NFYA/HAP2 subunit family.</text>
</comment>
<evidence type="ECO:0000250" key="1"/>
<evidence type="ECO:0000255" key="2">
    <source>
        <dbReference type="PROSITE-ProRule" id="PRU00966"/>
    </source>
</evidence>
<evidence type="ECO:0000256" key="3">
    <source>
        <dbReference type="SAM" id="MobiDB-lite"/>
    </source>
</evidence>
<evidence type="ECO:0000269" key="4">
    <source>
    </source>
</evidence>
<evidence type="ECO:0000269" key="5">
    <source>
    </source>
</evidence>
<evidence type="ECO:0000303" key="6">
    <source>
    </source>
</evidence>
<evidence type="ECO:0000305" key="7"/>
<accession>Q9LXV5</accession>
<accession>O23630</accession>
<proteinExistence type="evidence at transcript level"/>
<name>NFYA1_ARATH</name>
<sequence length="272" mass="30038">MQSKPGRENEEEVNNHHAVQQPMMYAEPWWKNNSFGVVPQARPSGIPSNSSSLDCPNGSESNDVHSASEDGALNGENDGTWKDSQAATSSRSVDNHGMEGNDPALSIRNMHDQPLVQPPELVGHYIACVPNPYQDPYYGGLMGAYGHQQLGFRPYLGMPRERTALPLDMAQEPVYVNAKQYEGILRRRKARAKAELERKVIRDRKPYLHESRHKHAMRRARASGGRFAKKSEVEAGEDAGGRDRERGSATNSSGSEQVETDSNETLNSSGAP</sequence>
<gene>
    <name type="primary">NFYA1</name>
    <name type="synonym">EMB2220</name>
    <name type="synonym">HAP2A</name>
    <name type="ordered locus">At5g12840</name>
    <name type="ORF">T24H18_10</name>
</gene>